<gene>
    <name type="primary">SRP19</name>
</gene>
<comment type="function">
    <text evidence="1">Component of the signal recognition particle (SRP) complex, a ribonucleoprotein complex that mediates the cotranslational targeting of secretory and membrane proteins to the endoplasmic reticulum (ER) (By similarity). Binds directly to 7SL RNA (By similarity). Mediates binding of SRP54 to the SRP complex (By similarity).</text>
</comment>
<comment type="subunit">
    <text evidence="2">Component of a signal recognition particle complex that consists of a 7SL RNA molecule of 300 nucleotides and six protein subunits: SRP72, SRP68, SRP54, SRP19, SRP14 and SRP9. Interacts with IPO5, IPO7, IPO8, KPNB1 and TNPO1. Interactions with IPO8 and TNPO1 may be involved in SRP19 import into the nucleus (By similarity).</text>
</comment>
<comment type="subcellular location">
    <subcellularLocation>
        <location evidence="2">Cytoplasm</location>
    </subcellularLocation>
    <subcellularLocation>
        <location evidence="2">Nucleus</location>
        <location evidence="2">Nucleolus</location>
    </subcellularLocation>
    <subcellularLocation>
        <location evidence="2">Nucleus</location>
        <location evidence="2">Nucleoplasm</location>
    </subcellularLocation>
    <text evidence="2">Although the signal recognition particle complex acts in the cytoplasm, it assembles at least in part in the nucleus and/or the nucleolus. SRP19 nuclear import may be mediated by IPO8/Imp8 and TPNO1/Trn.</text>
</comment>
<comment type="similarity">
    <text evidence="4">Belongs to the SRP19 family.</text>
</comment>
<comment type="sequence caution" evidence="4">
    <conflict type="erroneous initiation">
        <sequence resource="EMBL-CDS" id="CAH90799"/>
    </conflict>
</comment>
<protein>
    <recommendedName>
        <fullName>Signal recognition particle 19 kDa protein</fullName>
        <shortName>SRP19</shortName>
    </recommendedName>
</protein>
<organism>
    <name type="scientific">Pongo abelii</name>
    <name type="common">Sumatran orangutan</name>
    <name type="synonym">Pongo pygmaeus abelii</name>
    <dbReference type="NCBI Taxonomy" id="9601"/>
    <lineage>
        <taxon>Eukaryota</taxon>
        <taxon>Metazoa</taxon>
        <taxon>Chordata</taxon>
        <taxon>Craniata</taxon>
        <taxon>Vertebrata</taxon>
        <taxon>Euteleostomi</taxon>
        <taxon>Mammalia</taxon>
        <taxon>Eutheria</taxon>
        <taxon>Euarchontoglires</taxon>
        <taxon>Primates</taxon>
        <taxon>Haplorrhini</taxon>
        <taxon>Catarrhini</taxon>
        <taxon>Hominidae</taxon>
        <taxon>Pongo</taxon>
    </lineage>
</organism>
<feature type="chain" id="PRO_0000135199" description="Signal recognition particle 19 kDa protein">
    <location>
        <begin position="1"/>
        <end position="144"/>
    </location>
</feature>
<feature type="region of interest" description="Disordered" evidence="3">
    <location>
        <begin position="117"/>
        <end position="144"/>
    </location>
</feature>
<feature type="compositionally biased region" description="Polar residues" evidence="3">
    <location>
        <begin position="120"/>
        <end position="133"/>
    </location>
</feature>
<name>SRP19_PONAB</name>
<keyword id="KW-0002">3D-structure</keyword>
<keyword id="KW-0963">Cytoplasm</keyword>
<keyword id="KW-0539">Nucleus</keyword>
<keyword id="KW-1185">Reference proteome</keyword>
<keyword id="KW-0687">Ribonucleoprotein</keyword>
<keyword id="KW-0694">RNA-binding</keyword>
<keyword id="KW-0733">Signal recognition particle</keyword>
<accession>Q5RBR1</accession>
<reference key="1">
    <citation type="submission" date="2004-11" db="EMBL/GenBank/DDBJ databases">
        <authorList>
            <consortium name="The German cDNA consortium"/>
        </authorList>
    </citation>
    <scope>NUCLEOTIDE SEQUENCE [LARGE SCALE MRNA]</scope>
    <source>
        <tissue>Kidney</tissue>
    </source>
</reference>
<proteinExistence type="evidence at protein level"/>
<dbReference type="EMBL" id="CR858577">
    <property type="protein sequence ID" value="CAH90799.1"/>
    <property type="status" value="ALT_INIT"/>
    <property type="molecule type" value="mRNA"/>
</dbReference>
<dbReference type="RefSeq" id="NP_001125454.1">
    <property type="nucleotide sequence ID" value="NM_001131982.1"/>
</dbReference>
<dbReference type="PDB" id="2GO5">
    <property type="method" value="EM"/>
    <property type="resolution" value="7.40 A"/>
    <property type="chains" value="B=14-120"/>
</dbReference>
<dbReference type="PDBsum" id="2GO5"/>
<dbReference type="SMR" id="Q5RBR1"/>
<dbReference type="FunCoup" id="Q5RBR1">
    <property type="interactions" value="2722"/>
</dbReference>
<dbReference type="STRING" id="9601.ENSPPYP00000024199"/>
<dbReference type="GeneID" id="100172362"/>
<dbReference type="KEGG" id="pon:100172362"/>
<dbReference type="CTD" id="6728"/>
<dbReference type="eggNOG" id="KOG3198">
    <property type="taxonomic scope" value="Eukaryota"/>
</dbReference>
<dbReference type="HOGENOM" id="CLU_064201_2_1_1"/>
<dbReference type="InParanoid" id="Q5RBR1"/>
<dbReference type="OrthoDB" id="2190947at2759"/>
<dbReference type="TreeFam" id="TF106248"/>
<dbReference type="EvolutionaryTrace" id="Q5RBR1"/>
<dbReference type="Proteomes" id="UP000001595">
    <property type="component" value="Unplaced"/>
</dbReference>
<dbReference type="GO" id="GO:0005730">
    <property type="term" value="C:nucleolus"/>
    <property type="evidence" value="ECO:0007669"/>
    <property type="project" value="UniProtKB-SubCell"/>
</dbReference>
<dbReference type="GO" id="GO:0005654">
    <property type="term" value="C:nucleoplasm"/>
    <property type="evidence" value="ECO:0007669"/>
    <property type="project" value="UniProtKB-SubCell"/>
</dbReference>
<dbReference type="GO" id="GO:0005786">
    <property type="term" value="C:signal recognition particle, endoplasmic reticulum targeting"/>
    <property type="evidence" value="ECO:0007669"/>
    <property type="project" value="UniProtKB-KW"/>
</dbReference>
<dbReference type="GO" id="GO:0008312">
    <property type="term" value="F:7S RNA binding"/>
    <property type="evidence" value="ECO:0007669"/>
    <property type="project" value="InterPro"/>
</dbReference>
<dbReference type="GO" id="GO:0006617">
    <property type="term" value="P:SRP-dependent cotranslational protein targeting to membrane, signal sequence recognition"/>
    <property type="evidence" value="ECO:0007669"/>
    <property type="project" value="TreeGrafter"/>
</dbReference>
<dbReference type="FunFam" id="3.30.56.30:FF:000001">
    <property type="entry name" value="signal recognition particle 19 kDa protein"/>
    <property type="match status" value="1"/>
</dbReference>
<dbReference type="Gene3D" id="3.30.56.30">
    <property type="entry name" value="Signal recognition particle, SRP19-like subunit"/>
    <property type="match status" value="1"/>
</dbReference>
<dbReference type="InterPro" id="IPR002778">
    <property type="entry name" value="Signal_recog_particle_SRP19"/>
</dbReference>
<dbReference type="InterPro" id="IPR036521">
    <property type="entry name" value="SRP19-like_sf"/>
</dbReference>
<dbReference type="PANTHER" id="PTHR17453">
    <property type="entry name" value="SIGNAL RECOGNITION PARTICLE 19 KD PROTEIN"/>
    <property type="match status" value="1"/>
</dbReference>
<dbReference type="PANTHER" id="PTHR17453:SF0">
    <property type="entry name" value="SIGNAL RECOGNITION PARTICLE 19 KDA PROTEIN"/>
    <property type="match status" value="1"/>
</dbReference>
<dbReference type="Pfam" id="PF01922">
    <property type="entry name" value="SRP19"/>
    <property type="match status" value="1"/>
</dbReference>
<dbReference type="SUPFAM" id="SSF69695">
    <property type="entry name" value="SRP19"/>
    <property type="match status" value="1"/>
</dbReference>
<evidence type="ECO:0000250" key="1">
    <source>
        <dbReference type="UniProtKB" id="J9PAS6"/>
    </source>
</evidence>
<evidence type="ECO:0000250" key="2">
    <source>
        <dbReference type="UniProtKB" id="P09132"/>
    </source>
</evidence>
<evidence type="ECO:0000256" key="3">
    <source>
        <dbReference type="SAM" id="MobiDB-lite"/>
    </source>
</evidence>
<evidence type="ECO:0000305" key="4"/>
<sequence>MACAAARSPADQDRFICIYPAYLNNKKTIAEGRRIPISKAVENPTATEIQDVCSAVGLNVFLEKNKMYSREWNRDVQYRGRVRVQLKQEDGSLCLVQFPSRKSVMLYAAEMIPKLKTRTQKTGGADQSLQQGEGSKKGKGKKKK</sequence>